<name>MURE2_OCEIH</name>
<accession>Q8CZE4</accession>
<comment type="function">
    <text evidence="1">Catalyzes the addition of an amino acid to the nucleotide precursor UDP-N-acetylmuramoyl-L-alanyl-D-glutamate (UMAG) in the biosynthesis of bacterial cell-wall peptidoglycan.</text>
</comment>
<comment type="pathway">
    <text evidence="1">Cell wall biogenesis; peptidoglycan biosynthesis.</text>
</comment>
<comment type="subcellular location">
    <subcellularLocation>
        <location evidence="1">Cytoplasm</location>
    </subcellularLocation>
</comment>
<comment type="PTM">
    <text evidence="1">Carboxylation is probably crucial for Mg(2+) binding and, consequently, for the gamma-phosphate positioning of ATP.</text>
</comment>
<comment type="similarity">
    <text evidence="1">Belongs to the MurCDEF family. MurE subfamily.</text>
</comment>
<gene>
    <name evidence="1" type="primary">murE2</name>
    <name type="ordered locus">OB1998</name>
</gene>
<feature type="chain" id="PRO_0000101919" description="UDP-N-acetylmuramyl-tripeptide synthetase 2">
    <location>
        <begin position="1"/>
        <end position="492"/>
    </location>
</feature>
<feature type="binding site" evidence="1">
    <location>
        <position position="30"/>
    </location>
    <ligand>
        <name>UDP-N-acetyl-alpha-D-muramoyl-L-alanyl-D-glutamate</name>
        <dbReference type="ChEBI" id="CHEBI:83900"/>
    </ligand>
</feature>
<feature type="binding site" evidence="1">
    <location>
        <begin position="111"/>
        <end position="117"/>
    </location>
    <ligand>
        <name>ATP</name>
        <dbReference type="ChEBI" id="CHEBI:30616"/>
    </ligand>
</feature>
<feature type="binding site" evidence="1">
    <location>
        <begin position="154"/>
        <end position="155"/>
    </location>
    <ligand>
        <name>UDP-N-acetyl-alpha-D-muramoyl-L-alanyl-D-glutamate</name>
        <dbReference type="ChEBI" id="CHEBI:83900"/>
    </ligand>
</feature>
<feature type="binding site" evidence="1">
    <location>
        <position position="181"/>
    </location>
    <ligand>
        <name>UDP-N-acetyl-alpha-D-muramoyl-L-alanyl-D-glutamate</name>
        <dbReference type="ChEBI" id="CHEBI:83900"/>
    </ligand>
</feature>
<feature type="binding site" evidence="1">
    <location>
        <position position="187"/>
    </location>
    <ligand>
        <name>UDP-N-acetyl-alpha-D-muramoyl-L-alanyl-D-glutamate</name>
        <dbReference type="ChEBI" id="CHEBI:83900"/>
    </ligand>
</feature>
<feature type="binding site" evidence="1">
    <location>
        <position position="189"/>
    </location>
    <ligand>
        <name>UDP-N-acetyl-alpha-D-muramoyl-L-alanyl-D-glutamate</name>
        <dbReference type="ChEBI" id="CHEBI:83900"/>
    </ligand>
</feature>
<feature type="modified residue" description="N6-carboxylysine" evidence="1">
    <location>
        <position position="221"/>
    </location>
</feature>
<proteinExistence type="inferred from homology"/>
<reference key="1">
    <citation type="journal article" date="2002" name="Nucleic Acids Res.">
        <title>Genome sequence of Oceanobacillus iheyensis isolated from the Iheya Ridge and its unexpected adaptive capabilities to extreme environments.</title>
        <authorList>
            <person name="Takami H."/>
            <person name="Takaki Y."/>
            <person name="Uchiyama I."/>
        </authorList>
    </citation>
    <scope>NUCLEOTIDE SEQUENCE [LARGE SCALE GENOMIC DNA]</scope>
    <source>
        <strain>DSM 14371 / CIP 107618 / JCM 11309 / KCTC 3954 / HTE831</strain>
    </source>
</reference>
<evidence type="ECO:0000255" key="1">
    <source>
        <dbReference type="HAMAP-Rule" id="MF_00208"/>
    </source>
</evidence>
<protein>
    <recommendedName>
        <fullName evidence="1">UDP-N-acetylmuramyl-tripeptide synthetase 2</fullName>
        <ecNumber evidence="1">6.3.2.-</ecNumber>
    </recommendedName>
    <alternativeName>
        <fullName evidence="1">UDP-MurNAc-tripeptide synthetase 2</fullName>
    </alternativeName>
</protein>
<sequence>MNTYELISSLKIKQQIGKLPNTISSISHNSRQVDDNSLFICISGFTVDGHNFVAEAVENGATCIVAEREVNLDTNKATLIIVPDTNKAIATLAATFYKHPSHNLTIYGVTGTNGKTTVTTIINHLLTDNELSTALIGTNGFQINKDIYSSSNNTTSDVLTNQHMLYEAKNQGVTHVAMEVSSHGLEQGRLWGIDFTVATFTNLSHEHLDYHGSMEEYAATKVQLFSSLAIQPNKQKIAVLNRDDNWYEYFQKRTPVQIVSYGIYEQADFRATAIKYYKDRTSFELLTPEGSFQVQTKLMGEFNVYNVLAAIASVYVKESIPLTDLVKSIEGTPTPPGRMEKLESSGNRHIYIDYAHTPDALTKAINSLLPFKQNKLIVVVGTGGDRDKSIRPLLAKAASVADYVILTINDPRHEDPNNILQDLENGMLHHQYTCLENRKEAIREAINYSSPNDIILIAGKGKEPYQIIKNKKVAHNDATIALECSNELFPNI</sequence>
<dbReference type="EC" id="6.3.2.-" evidence="1"/>
<dbReference type="EMBL" id="BA000028">
    <property type="protein sequence ID" value="BAC13954.1"/>
    <property type="molecule type" value="Genomic_DNA"/>
</dbReference>
<dbReference type="RefSeq" id="WP_011066394.1">
    <property type="nucleotide sequence ID" value="NC_004193.1"/>
</dbReference>
<dbReference type="SMR" id="Q8CZE4"/>
<dbReference type="STRING" id="221109.gene:10734244"/>
<dbReference type="KEGG" id="oih:OB1998"/>
<dbReference type="eggNOG" id="COG0769">
    <property type="taxonomic scope" value="Bacteria"/>
</dbReference>
<dbReference type="HOGENOM" id="CLU_022291_0_1_9"/>
<dbReference type="OrthoDB" id="9800958at2"/>
<dbReference type="PhylomeDB" id="Q8CZE4"/>
<dbReference type="UniPathway" id="UPA00219"/>
<dbReference type="Proteomes" id="UP000000822">
    <property type="component" value="Chromosome"/>
</dbReference>
<dbReference type="GO" id="GO:0005737">
    <property type="term" value="C:cytoplasm"/>
    <property type="evidence" value="ECO:0007669"/>
    <property type="project" value="UniProtKB-SubCell"/>
</dbReference>
<dbReference type="GO" id="GO:0016881">
    <property type="term" value="F:acid-amino acid ligase activity"/>
    <property type="evidence" value="ECO:0007669"/>
    <property type="project" value="UniProtKB-UniRule"/>
</dbReference>
<dbReference type="GO" id="GO:0005524">
    <property type="term" value="F:ATP binding"/>
    <property type="evidence" value="ECO:0007669"/>
    <property type="project" value="UniProtKB-UniRule"/>
</dbReference>
<dbReference type="GO" id="GO:0000287">
    <property type="term" value="F:magnesium ion binding"/>
    <property type="evidence" value="ECO:0007669"/>
    <property type="project" value="UniProtKB-UniRule"/>
</dbReference>
<dbReference type="GO" id="GO:0051301">
    <property type="term" value="P:cell division"/>
    <property type="evidence" value="ECO:0007669"/>
    <property type="project" value="UniProtKB-KW"/>
</dbReference>
<dbReference type="GO" id="GO:0071555">
    <property type="term" value="P:cell wall organization"/>
    <property type="evidence" value="ECO:0007669"/>
    <property type="project" value="UniProtKB-KW"/>
</dbReference>
<dbReference type="GO" id="GO:0009252">
    <property type="term" value="P:peptidoglycan biosynthetic process"/>
    <property type="evidence" value="ECO:0007669"/>
    <property type="project" value="UniProtKB-UniRule"/>
</dbReference>
<dbReference type="GO" id="GO:0008360">
    <property type="term" value="P:regulation of cell shape"/>
    <property type="evidence" value="ECO:0007669"/>
    <property type="project" value="UniProtKB-KW"/>
</dbReference>
<dbReference type="Gene3D" id="3.90.190.20">
    <property type="entry name" value="Mur ligase, C-terminal domain"/>
    <property type="match status" value="1"/>
</dbReference>
<dbReference type="Gene3D" id="3.40.1190.10">
    <property type="entry name" value="Mur-like, catalytic domain"/>
    <property type="match status" value="1"/>
</dbReference>
<dbReference type="Gene3D" id="3.40.1390.10">
    <property type="entry name" value="MurE/MurF, N-terminal domain"/>
    <property type="match status" value="1"/>
</dbReference>
<dbReference type="HAMAP" id="MF_00208">
    <property type="entry name" value="MurE"/>
    <property type="match status" value="1"/>
</dbReference>
<dbReference type="InterPro" id="IPR036565">
    <property type="entry name" value="Mur-like_cat_sf"/>
</dbReference>
<dbReference type="InterPro" id="IPR004101">
    <property type="entry name" value="Mur_ligase_C"/>
</dbReference>
<dbReference type="InterPro" id="IPR036615">
    <property type="entry name" value="Mur_ligase_C_dom_sf"/>
</dbReference>
<dbReference type="InterPro" id="IPR013221">
    <property type="entry name" value="Mur_ligase_cen"/>
</dbReference>
<dbReference type="InterPro" id="IPR000713">
    <property type="entry name" value="Mur_ligase_N"/>
</dbReference>
<dbReference type="InterPro" id="IPR035911">
    <property type="entry name" value="MurE/MurF_N"/>
</dbReference>
<dbReference type="InterPro" id="IPR005761">
    <property type="entry name" value="UDP-N-AcMur-Glu-dNH2Pim_ligase"/>
</dbReference>
<dbReference type="NCBIfam" id="TIGR01085">
    <property type="entry name" value="murE"/>
    <property type="match status" value="1"/>
</dbReference>
<dbReference type="NCBIfam" id="NF001126">
    <property type="entry name" value="PRK00139.1-4"/>
    <property type="match status" value="1"/>
</dbReference>
<dbReference type="PANTHER" id="PTHR23135">
    <property type="entry name" value="MUR LIGASE FAMILY MEMBER"/>
    <property type="match status" value="1"/>
</dbReference>
<dbReference type="PANTHER" id="PTHR23135:SF4">
    <property type="entry name" value="UDP-N-ACETYLMURAMOYL-L-ALANYL-D-GLUTAMATE--2,6-DIAMINOPIMELATE LIGASE MURE HOMOLOG, CHLOROPLASTIC"/>
    <property type="match status" value="1"/>
</dbReference>
<dbReference type="Pfam" id="PF01225">
    <property type="entry name" value="Mur_ligase"/>
    <property type="match status" value="1"/>
</dbReference>
<dbReference type="Pfam" id="PF02875">
    <property type="entry name" value="Mur_ligase_C"/>
    <property type="match status" value="1"/>
</dbReference>
<dbReference type="Pfam" id="PF08245">
    <property type="entry name" value="Mur_ligase_M"/>
    <property type="match status" value="1"/>
</dbReference>
<dbReference type="SUPFAM" id="SSF53623">
    <property type="entry name" value="MurD-like peptide ligases, catalytic domain"/>
    <property type="match status" value="1"/>
</dbReference>
<dbReference type="SUPFAM" id="SSF53244">
    <property type="entry name" value="MurD-like peptide ligases, peptide-binding domain"/>
    <property type="match status" value="1"/>
</dbReference>
<dbReference type="SUPFAM" id="SSF63418">
    <property type="entry name" value="MurE/MurF N-terminal domain"/>
    <property type="match status" value="1"/>
</dbReference>
<keyword id="KW-0067">ATP-binding</keyword>
<keyword id="KW-0131">Cell cycle</keyword>
<keyword id="KW-0132">Cell division</keyword>
<keyword id="KW-0133">Cell shape</keyword>
<keyword id="KW-0961">Cell wall biogenesis/degradation</keyword>
<keyword id="KW-0963">Cytoplasm</keyword>
<keyword id="KW-0436">Ligase</keyword>
<keyword id="KW-0547">Nucleotide-binding</keyword>
<keyword id="KW-0573">Peptidoglycan synthesis</keyword>
<keyword id="KW-1185">Reference proteome</keyword>
<organism>
    <name type="scientific">Oceanobacillus iheyensis (strain DSM 14371 / CIP 107618 / JCM 11309 / KCTC 3954 / HTE831)</name>
    <dbReference type="NCBI Taxonomy" id="221109"/>
    <lineage>
        <taxon>Bacteria</taxon>
        <taxon>Bacillati</taxon>
        <taxon>Bacillota</taxon>
        <taxon>Bacilli</taxon>
        <taxon>Bacillales</taxon>
        <taxon>Bacillaceae</taxon>
        <taxon>Oceanobacillus</taxon>
    </lineage>
</organism>